<dbReference type="EC" id="2.7.7.23" evidence="1"/>
<dbReference type="EC" id="2.3.1.157" evidence="1"/>
<dbReference type="EMBL" id="CP000826">
    <property type="protein sequence ID" value="ABV39120.1"/>
    <property type="molecule type" value="Genomic_DNA"/>
</dbReference>
<dbReference type="SMR" id="A8G7N0"/>
<dbReference type="STRING" id="399741.Spro_0010"/>
<dbReference type="KEGG" id="spe:Spro_0010"/>
<dbReference type="eggNOG" id="COG1207">
    <property type="taxonomic scope" value="Bacteria"/>
</dbReference>
<dbReference type="HOGENOM" id="CLU_029499_15_2_6"/>
<dbReference type="OrthoDB" id="9775031at2"/>
<dbReference type="UniPathway" id="UPA00113">
    <property type="reaction ID" value="UER00532"/>
</dbReference>
<dbReference type="UniPathway" id="UPA00113">
    <property type="reaction ID" value="UER00533"/>
</dbReference>
<dbReference type="UniPathway" id="UPA00973"/>
<dbReference type="GO" id="GO:0005737">
    <property type="term" value="C:cytoplasm"/>
    <property type="evidence" value="ECO:0007669"/>
    <property type="project" value="UniProtKB-SubCell"/>
</dbReference>
<dbReference type="GO" id="GO:0016020">
    <property type="term" value="C:membrane"/>
    <property type="evidence" value="ECO:0007669"/>
    <property type="project" value="GOC"/>
</dbReference>
<dbReference type="GO" id="GO:0019134">
    <property type="term" value="F:glucosamine-1-phosphate N-acetyltransferase activity"/>
    <property type="evidence" value="ECO:0007669"/>
    <property type="project" value="UniProtKB-UniRule"/>
</dbReference>
<dbReference type="GO" id="GO:0000287">
    <property type="term" value="F:magnesium ion binding"/>
    <property type="evidence" value="ECO:0007669"/>
    <property type="project" value="UniProtKB-UniRule"/>
</dbReference>
<dbReference type="GO" id="GO:0003977">
    <property type="term" value="F:UDP-N-acetylglucosamine diphosphorylase activity"/>
    <property type="evidence" value="ECO:0007669"/>
    <property type="project" value="UniProtKB-UniRule"/>
</dbReference>
<dbReference type="GO" id="GO:0000902">
    <property type="term" value="P:cell morphogenesis"/>
    <property type="evidence" value="ECO:0007669"/>
    <property type="project" value="UniProtKB-UniRule"/>
</dbReference>
<dbReference type="GO" id="GO:0071555">
    <property type="term" value="P:cell wall organization"/>
    <property type="evidence" value="ECO:0007669"/>
    <property type="project" value="UniProtKB-KW"/>
</dbReference>
<dbReference type="GO" id="GO:0009245">
    <property type="term" value="P:lipid A biosynthetic process"/>
    <property type="evidence" value="ECO:0007669"/>
    <property type="project" value="UniProtKB-UniRule"/>
</dbReference>
<dbReference type="GO" id="GO:0009252">
    <property type="term" value="P:peptidoglycan biosynthetic process"/>
    <property type="evidence" value="ECO:0007669"/>
    <property type="project" value="UniProtKB-UniRule"/>
</dbReference>
<dbReference type="GO" id="GO:0008360">
    <property type="term" value="P:regulation of cell shape"/>
    <property type="evidence" value="ECO:0007669"/>
    <property type="project" value="UniProtKB-KW"/>
</dbReference>
<dbReference type="GO" id="GO:0006048">
    <property type="term" value="P:UDP-N-acetylglucosamine biosynthetic process"/>
    <property type="evidence" value="ECO:0007669"/>
    <property type="project" value="UniProtKB-UniPathway"/>
</dbReference>
<dbReference type="CDD" id="cd02540">
    <property type="entry name" value="GT2_GlmU_N_bac"/>
    <property type="match status" value="1"/>
</dbReference>
<dbReference type="CDD" id="cd03353">
    <property type="entry name" value="LbH_GlmU_C"/>
    <property type="match status" value="1"/>
</dbReference>
<dbReference type="FunFam" id="2.160.10.10:FF:000011">
    <property type="entry name" value="Bifunctional protein GlmU"/>
    <property type="match status" value="1"/>
</dbReference>
<dbReference type="FunFam" id="3.90.550.10:FF:000006">
    <property type="entry name" value="Bifunctional protein GlmU"/>
    <property type="match status" value="1"/>
</dbReference>
<dbReference type="Gene3D" id="2.160.10.10">
    <property type="entry name" value="Hexapeptide repeat proteins"/>
    <property type="match status" value="1"/>
</dbReference>
<dbReference type="Gene3D" id="3.90.550.10">
    <property type="entry name" value="Spore Coat Polysaccharide Biosynthesis Protein SpsA, Chain A"/>
    <property type="match status" value="1"/>
</dbReference>
<dbReference type="HAMAP" id="MF_01631">
    <property type="entry name" value="GlmU"/>
    <property type="match status" value="1"/>
</dbReference>
<dbReference type="InterPro" id="IPR005882">
    <property type="entry name" value="Bifunctional_GlmU"/>
</dbReference>
<dbReference type="InterPro" id="IPR050065">
    <property type="entry name" value="GlmU-like"/>
</dbReference>
<dbReference type="InterPro" id="IPR038009">
    <property type="entry name" value="GlmU_C_LbH"/>
</dbReference>
<dbReference type="InterPro" id="IPR001451">
    <property type="entry name" value="Hexapep"/>
</dbReference>
<dbReference type="InterPro" id="IPR018357">
    <property type="entry name" value="Hexapep_transf_CS"/>
</dbReference>
<dbReference type="InterPro" id="IPR025877">
    <property type="entry name" value="MobA-like_NTP_Trfase"/>
</dbReference>
<dbReference type="InterPro" id="IPR029044">
    <property type="entry name" value="Nucleotide-diphossugar_trans"/>
</dbReference>
<dbReference type="InterPro" id="IPR011004">
    <property type="entry name" value="Trimer_LpxA-like_sf"/>
</dbReference>
<dbReference type="NCBIfam" id="TIGR01173">
    <property type="entry name" value="glmU"/>
    <property type="match status" value="1"/>
</dbReference>
<dbReference type="NCBIfam" id="NF006986">
    <property type="entry name" value="PRK09451.1"/>
    <property type="match status" value="1"/>
</dbReference>
<dbReference type="PANTHER" id="PTHR43584:SF3">
    <property type="entry name" value="BIFUNCTIONAL PROTEIN GLMU"/>
    <property type="match status" value="1"/>
</dbReference>
<dbReference type="PANTHER" id="PTHR43584">
    <property type="entry name" value="NUCLEOTIDYL TRANSFERASE"/>
    <property type="match status" value="1"/>
</dbReference>
<dbReference type="Pfam" id="PF00132">
    <property type="entry name" value="Hexapep"/>
    <property type="match status" value="1"/>
</dbReference>
<dbReference type="Pfam" id="PF14602">
    <property type="entry name" value="Hexapep_2"/>
    <property type="match status" value="1"/>
</dbReference>
<dbReference type="Pfam" id="PF12804">
    <property type="entry name" value="NTP_transf_3"/>
    <property type="match status" value="1"/>
</dbReference>
<dbReference type="SUPFAM" id="SSF53448">
    <property type="entry name" value="Nucleotide-diphospho-sugar transferases"/>
    <property type="match status" value="1"/>
</dbReference>
<dbReference type="SUPFAM" id="SSF51161">
    <property type="entry name" value="Trimeric LpxA-like enzymes"/>
    <property type="match status" value="1"/>
</dbReference>
<dbReference type="PROSITE" id="PS00101">
    <property type="entry name" value="HEXAPEP_TRANSFERASES"/>
    <property type="match status" value="1"/>
</dbReference>
<protein>
    <recommendedName>
        <fullName evidence="1">Bifunctional protein GlmU</fullName>
    </recommendedName>
    <domain>
        <recommendedName>
            <fullName evidence="1">UDP-N-acetylglucosamine pyrophosphorylase</fullName>
            <ecNumber evidence="1">2.7.7.23</ecNumber>
        </recommendedName>
        <alternativeName>
            <fullName evidence="1">N-acetylglucosamine-1-phosphate uridyltransferase</fullName>
        </alternativeName>
    </domain>
    <domain>
        <recommendedName>
            <fullName evidence="1">Glucosamine-1-phosphate N-acetyltransferase</fullName>
            <ecNumber evidence="1">2.3.1.157</ecNumber>
        </recommendedName>
    </domain>
</protein>
<accession>A8G7N0</accession>
<name>GLMU_SERP5</name>
<organism>
    <name type="scientific">Serratia proteamaculans (strain 568)</name>
    <dbReference type="NCBI Taxonomy" id="399741"/>
    <lineage>
        <taxon>Bacteria</taxon>
        <taxon>Pseudomonadati</taxon>
        <taxon>Pseudomonadota</taxon>
        <taxon>Gammaproteobacteria</taxon>
        <taxon>Enterobacterales</taxon>
        <taxon>Yersiniaceae</taxon>
        <taxon>Serratia</taxon>
    </lineage>
</organism>
<evidence type="ECO:0000255" key="1">
    <source>
        <dbReference type="HAMAP-Rule" id="MF_01631"/>
    </source>
</evidence>
<reference key="1">
    <citation type="submission" date="2007-09" db="EMBL/GenBank/DDBJ databases">
        <title>Complete sequence of chromosome of Serratia proteamaculans 568.</title>
        <authorList>
            <consortium name="US DOE Joint Genome Institute"/>
            <person name="Copeland A."/>
            <person name="Lucas S."/>
            <person name="Lapidus A."/>
            <person name="Barry K."/>
            <person name="Glavina del Rio T."/>
            <person name="Dalin E."/>
            <person name="Tice H."/>
            <person name="Pitluck S."/>
            <person name="Chain P."/>
            <person name="Malfatti S."/>
            <person name="Shin M."/>
            <person name="Vergez L."/>
            <person name="Schmutz J."/>
            <person name="Larimer F."/>
            <person name="Land M."/>
            <person name="Hauser L."/>
            <person name="Kyrpides N."/>
            <person name="Kim E."/>
            <person name="Taghavi S."/>
            <person name="Newman L."/>
            <person name="Vangronsveld J."/>
            <person name="van der Lelie D."/>
            <person name="Richardson P."/>
        </authorList>
    </citation>
    <scope>NUCLEOTIDE SEQUENCE [LARGE SCALE GENOMIC DNA]</scope>
    <source>
        <strain>568</strain>
    </source>
</reference>
<feature type="chain" id="PRO_1000069736" description="Bifunctional protein GlmU">
    <location>
        <begin position="1"/>
        <end position="456"/>
    </location>
</feature>
<feature type="region of interest" description="Pyrophosphorylase" evidence="1">
    <location>
        <begin position="1"/>
        <end position="229"/>
    </location>
</feature>
<feature type="region of interest" description="Linker" evidence="1">
    <location>
        <begin position="230"/>
        <end position="250"/>
    </location>
</feature>
<feature type="region of interest" description="N-acetyltransferase" evidence="1">
    <location>
        <begin position="251"/>
        <end position="456"/>
    </location>
</feature>
<feature type="active site" description="Proton acceptor" evidence="1">
    <location>
        <position position="363"/>
    </location>
</feature>
<feature type="binding site" evidence="1">
    <location>
        <begin position="11"/>
        <end position="14"/>
    </location>
    <ligand>
        <name>UDP-N-acetyl-alpha-D-glucosamine</name>
        <dbReference type="ChEBI" id="CHEBI:57705"/>
    </ligand>
</feature>
<feature type="binding site" evidence="1">
    <location>
        <position position="25"/>
    </location>
    <ligand>
        <name>UDP-N-acetyl-alpha-D-glucosamine</name>
        <dbReference type="ChEBI" id="CHEBI:57705"/>
    </ligand>
</feature>
<feature type="binding site" evidence="1">
    <location>
        <position position="76"/>
    </location>
    <ligand>
        <name>UDP-N-acetyl-alpha-D-glucosamine</name>
        <dbReference type="ChEBI" id="CHEBI:57705"/>
    </ligand>
</feature>
<feature type="binding site" evidence="1">
    <location>
        <begin position="81"/>
        <end position="82"/>
    </location>
    <ligand>
        <name>UDP-N-acetyl-alpha-D-glucosamine</name>
        <dbReference type="ChEBI" id="CHEBI:57705"/>
    </ligand>
</feature>
<feature type="binding site" evidence="1">
    <location>
        <begin position="103"/>
        <end position="105"/>
    </location>
    <ligand>
        <name>UDP-N-acetyl-alpha-D-glucosamine</name>
        <dbReference type="ChEBI" id="CHEBI:57705"/>
    </ligand>
</feature>
<feature type="binding site" evidence="1">
    <location>
        <position position="105"/>
    </location>
    <ligand>
        <name>Mg(2+)</name>
        <dbReference type="ChEBI" id="CHEBI:18420"/>
    </ligand>
</feature>
<feature type="binding site" evidence="1">
    <location>
        <position position="140"/>
    </location>
    <ligand>
        <name>UDP-N-acetyl-alpha-D-glucosamine</name>
        <dbReference type="ChEBI" id="CHEBI:57705"/>
    </ligand>
</feature>
<feature type="binding site" evidence="1">
    <location>
        <position position="154"/>
    </location>
    <ligand>
        <name>UDP-N-acetyl-alpha-D-glucosamine</name>
        <dbReference type="ChEBI" id="CHEBI:57705"/>
    </ligand>
</feature>
<feature type="binding site" evidence="1">
    <location>
        <position position="169"/>
    </location>
    <ligand>
        <name>UDP-N-acetyl-alpha-D-glucosamine</name>
        <dbReference type="ChEBI" id="CHEBI:57705"/>
    </ligand>
</feature>
<feature type="binding site" evidence="1">
    <location>
        <position position="227"/>
    </location>
    <ligand>
        <name>Mg(2+)</name>
        <dbReference type="ChEBI" id="CHEBI:18420"/>
    </ligand>
</feature>
<feature type="binding site" evidence="1">
    <location>
        <position position="227"/>
    </location>
    <ligand>
        <name>UDP-N-acetyl-alpha-D-glucosamine</name>
        <dbReference type="ChEBI" id="CHEBI:57705"/>
    </ligand>
</feature>
<feature type="binding site" evidence="1">
    <location>
        <position position="333"/>
    </location>
    <ligand>
        <name>UDP-N-acetyl-alpha-D-glucosamine</name>
        <dbReference type="ChEBI" id="CHEBI:57705"/>
    </ligand>
</feature>
<feature type="binding site" evidence="1">
    <location>
        <position position="351"/>
    </location>
    <ligand>
        <name>UDP-N-acetyl-alpha-D-glucosamine</name>
        <dbReference type="ChEBI" id="CHEBI:57705"/>
    </ligand>
</feature>
<feature type="binding site" evidence="1">
    <location>
        <position position="366"/>
    </location>
    <ligand>
        <name>UDP-N-acetyl-alpha-D-glucosamine</name>
        <dbReference type="ChEBI" id="CHEBI:57705"/>
    </ligand>
</feature>
<feature type="binding site" evidence="1">
    <location>
        <position position="377"/>
    </location>
    <ligand>
        <name>UDP-N-acetyl-alpha-D-glucosamine</name>
        <dbReference type="ChEBI" id="CHEBI:57705"/>
    </ligand>
</feature>
<feature type="binding site" evidence="1">
    <location>
        <position position="380"/>
    </location>
    <ligand>
        <name>acetyl-CoA</name>
        <dbReference type="ChEBI" id="CHEBI:57288"/>
    </ligand>
</feature>
<feature type="binding site" evidence="1">
    <location>
        <begin position="386"/>
        <end position="387"/>
    </location>
    <ligand>
        <name>acetyl-CoA</name>
        <dbReference type="ChEBI" id="CHEBI:57288"/>
    </ligand>
</feature>
<feature type="binding site" evidence="1">
    <location>
        <position position="405"/>
    </location>
    <ligand>
        <name>acetyl-CoA</name>
        <dbReference type="ChEBI" id="CHEBI:57288"/>
    </ligand>
</feature>
<feature type="binding site" evidence="1">
    <location>
        <position position="423"/>
    </location>
    <ligand>
        <name>acetyl-CoA</name>
        <dbReference type="ChEBI" id="CHEBI:57288"/>
    </ligand>
</feature>
<feature type="binding site" evidence="1">
    <location>
        <position position="440"/>
    </location>
    <ligand>
        <name>acetyl-CoA</name>
        <dbReference type="ChEBI" id="CHEBI:57288"/>
    </ligand>
</feature>
<proteinExistence type="inferred from homology"/>
<comment type="function">
    <text evidence="1">Catalyzes the last two sequential reactions in the de novo biosynthetic pathway for UDP-N-acetylglucosamine (UDP-GlcNAc). The C-terminal domain catalyzes the transfer of acetyl group from acetyl coenzyme A to glucosamine-1-phosphate (GlcN-1-P) to produce N-acetylglucosamine-1-phosphate (GlcNAc-1-P), which is converted into UDP-GlcNAc by the transfer of uridine 5-monophosphate (from uridine 5-triphosphate), a reaction catalyzed by the N-terminal domain.</text>
</comment>
<comment type="catalytic activity">
    <reaction evidence="1">
        <text>alpha-D-glucosamine 1-phosphate + acetyl-CoA = N-acetyl-alpha-D-glucosamine 1-phosphate + CoA + H(+)</text>
        <dbReference type="Rhea" id="RHEA:13725"/>
        <dbReference type="ChEBI" id="CHEBI:15378"/>
        <dbReference type="ChEBI" id="CHEBI:57287"/>
        <dbReference type="ChEBI" id="CHEBI:57288"/>
        <dbReference type="ChEBI" id="CHEBI:57776"/>
        <dbReference type="ChEBI" id="CHEBI:58516"/>
        <dbReference type="EC" id="2.3.1.157"/>
    </reaction>
</comment>
<comment type="catalytic activity">
    <reaction evidence="1">
        <text>N-acetyl-alpha-D-glucosamine 1-phosphate + UTP + H(+) = UDP-N-acetyl-alpha-D-glucosamine + diphosphate</text>
        <dbReference type="Rhea" id="RHEA:13509"/>
        <dbReference type="ChEBI" id="CHEBI:15378"/>
        <dbReference type="ChEBI" id="CHEBI:33019"/>
        <dbReference type="ChEBI" id="CHEBI:46398"/>
        <dbReference type="ChEBI" id="CHEBI:57705"/>
        <dbReference type="ChEBI" id="CHEBI:57776"/>
        <dbReference type="EC" id="2.7.7.23"/>
    </reaction>
</comment>
<comment type="cofactor">
    <cofactor evidence="1">
        <name>Mg(2+)</name>
        <dbReference type="ChEBI" id="CHEBI:18420"/>
    </cofactor>
    <text evidence="1">Binds 1 Mg(2+) ion per subunit.</text>
</comment>
<comment type="pathway">
    <text evidence="1">Nucleotide-sugar biosynthesis; UDP-N-acetyl-alpha-D-glucosamine biosynthesis; N-acetyl-alpha-D-glucosamine 1-phosphate from alpha-D-glucosamine 6-phosphate (route II): step 2/2.</text>
</comment>
<comment type="pathway">
    <text evidence="1">Nucleotide-sugar biosynthesis; UDP-N-acetyl-alpha-D-glucosamine biosynthesis; UDP-N-acetyl-alpha-D-glucosamine from N-acetyl-alpha-D-glucosamine 1-phosphate: step 1/1.</text>
</comment>
<comment type="pathway">
    <text evidence="1">Bacterial outer membrane biogenesis; LPS lipid A biosynthesis.</text>
</comment>
<comment type="subunit">
    <text evidence="1">Homotrimer.</text>
</comment>
<comment type="subcellular location">
    <subcellularLocation>
        <location evidence="1">Cytoplasm</location>
    </subcellularLocation>
</comment>
<comment type="similarity">
    <text evidence="1">In the N-terminal section; belongs to the N-acetylglucosamine-1-phosphate uridyltransferase family.</text>
</comment>
<comment type="similarity">
    <text evidence="1">In the C-terminal section; belongs to the transferase hexapeptide repeat family.</text>
</comment>
<gene>
    <name evidence="1" type="primary">glmU</name>
    <name type="ordered locus">Spro_0010</name>
</gene>
<keyword id="KW-0012">Acyltransferase</keyword>
<keyword id="KW-0133">Cell shape</keyword>
<keyword id="KW-0961">Cell wall biogenesis/degradation</keyword>
<keyword id="KW-0963">Cytoplasm</keyword>
<keyword id="KW-0460">Magnesium</keyword>
<keyword id="KW-0479">Metal-binding</keyword>
<keyword id="KW-0511">Multifunctional enzyme</keyword>
<keyword id="KW-0548">Nucleotidyltransferase</keyword>
<keyword id="KW-0573">Peptidoglycan synthesis</keyword>
<keyword id="KW-0677">Repeat</keyword>
<keyword id="KW-0808">Transferase</keyword>
<sequence length="456" mass="48735">MSNSAMSVVILAAGKGTRMYSDLPKVLHPLAGKPMVQHVIDAAMKLGAKNVHLVYGHGGDLLKNTLTDGALNWVLQAEQLGTGHAMQQAAPHFADDEDVLMLYGDVPLISVDTLQRLMAAKPQGGIGLLTVKLADPSGYGRIVRENDQVVGIVEHKDANEAQRQINEINTGILVANGRDLKRWLGMLNNDNAQGEFYITDIIALAHADGKKIEAVHPSRLSEVEGVNNRLQLSRLERIYQAEQSEKLLLAGVMLLDPARFDLRGELVHGRDISIDANVIIEGTVKLGDRVKIGAGCVLKNCVIGDDCEISPYSVLEDAVLAAECTVGPFARLRPGAELAVGAHVGNFVEMKKARLGKGSKAGHLSYLGDAEIGDDVNIGAGTITCNYDGANKHKTIIGDGVFVGSDTQLVAPVSVGKGSTIAAGTTVTRDIGEDELVLSRVKQVHIQGWQRPVKKK</sequence>